<reference key="1">
    <citation type="journal article" date="2003" name="Nat. Biotechnol.">
        <title>The genome sequence of the entomopathogenic bacterium Photorhabdus luminescens.</title>
        <authorList>
            <person name="Duchaud E."/>
            <person name="Rusniok C."/>
            <person name="Frangeul L."/>
            <person name="Buchrieser C."/>
            <person name="Givaudan A."/>
            <person name="Taourit S."/>
            <person name="Bocs S."/>
            <person name="Boursaux-Eude C."/>
            <person name="Chandler M."/>
            <person name="Charles J.-F."/>
            <person name="Dassa E."/>
            <person name="Derose R."/>
            <person name="Derzelle S."/>
            <person name="Freyssinet G."/>
            <person name="Gaudriault S."/>
            <person name="Medigue C."/>
            <person name="Lanois A."/>
            <person name="Powell K."/>
            <person name="Siguier P."/>
            <person name="Vincent R."/>
            <person name="Wingate V."/>
            <person name="Zouine M."/>
            <person name="Glaser P."/>
            <person name="Boemare N."/>
            <person name="Danchin A."/>
            <person name="Kunst F."/>
        </authorList>
    </citation>
    <scope>NUCLEOTIDE SEQUENCE [LARGE SCALE GENOMIC DNA]</scope>
    <source>
        <strain>DSM 15139 / CIP 105565 / TT01</strain>
    </source>
</reference>
<proteinExistence type="inferred from homology"/>
<evidence type="ECO:0000255" key="1">
    <source>
        <dbReference type="HAMAP-Rule" id="MF_00175"/>
    </source>
</evidence>
<evidence type="ECO:0000255" key="2">
    <source>
        <dbReference type="PROSITE-ProRule" id="PRU01250"/>
    </source>
</evidence>
<dbReference type="EMBL" id="BX571872">
    <property type="protein sequence ID" value="CAE16240.1"/>
    <property type="molecule type" value="Genomic_DNA"/>
</dbReference>
<dbReference type="RefSeq" id="WP_011148007.1">
    <property type="nucleotide sequence ID" value="NC_005126.1"/>
</dbReference>
<dbReference type="SMR" id="Q7N0L4"/>
<dbReference type="STRING" id="243265.plu3868"/>
<dbReference type="GeneID" id="48850099"/>
<dbReference type="KEGG" id="plu:plu3868"/>
<dbReference type="eggNOG" id="COG1219">
    <property type="taxonomic scope" value="Bacteria"/>
</dbReference>
<dbReference type="HOGENOM" id="CLU_014218_8_2_6"/>
<dbReference type="OrthoDB" id="9804062at2"/>
<dbReference type="Proteomes" id="UP000002514">
    <property type="component" value="Chromosome"/>
</dbReference>
<dbReference type="GO" id="GO:0009376">
    <property type="term" value="C:HslUV protease complex"/>
    <property type="evidence" value="ECO:0007669"/>
    <property type="project" value="TreeGrafter"/>
</dbReference>
<dbReference type="GO" id="GO:0005524">
    <property type="term" value="F:ATP binding"/>
    <property type="evidence" value="ECO:0007669"/>
    <property type="project" value="UniProtKB-UniRule"/>
</dbReference>
<dbReference type="GO" id="GO:0016887">
    <property type="term" value="F:ATP hydrolysis activity"/>
    <property type="evidence" value="ECO:0007669"/>
    <property type="project" value="InterPro"/>
</dbReference>
<dbReference type="GO" id="GO:0140662">
    <property type="term" value="F:ATP-dependent protein folding chaperone"/>
    <property type="evidence" value="ECO:0007669"/>
    <property type="project" value="InterPro"/>
</dbReference>
<dbReference type="GO" id="GO:0046983">
    <property type="term" value="F:protein dimerization activity"/>
    <property type="evidence" value="ECO:0007669"/>
    <property type="project" value="InterPro"/>
</dbReference>
<dbReference type="GO" id="GO:0051082">
    <property type="term" value="F:unfolded protein binding"/>
    <property type="evidence" value="ECO:0007669"/>
    <property type="project" value="UniProtKB-UniRule"/>
</dbReference>
<dbReference type="GO" id="GO:0008270">
    <property type="term" value="F:zinc ion binding"/>
    <property type="evidence" value="ECO:0007669"/>
    <property type="project" value="InterPro"/>
</dbReference>
<dbReference type="GO" id="GO:0051301">
    <property type="term" value="P:cell division"/>
    <property type="evidence" value="ECO:0007669"/>
    <property type="project" value="TreeGrafter"/>
</dbReference>
<dbReference type="GO" id="GO:0051603">
    <property type="term" value="P:proteolysis involved in protein catabolic process"/>
    <property type="evidence" value="ECO:0007669"/>
    <property type="project" value="TreeGrafter"/>
</dbReference>
<dbReference type="CDD" id="cd19497">
    <property type="entry name" value="RecA-like_ClpX"/>
    <property type="match status" value="1"/>
</dbReference>
<dbReference type="FunFam" id="1.10.8.60:FF:000002">
    <property type="entry name" value="ATP-dependent Clp protease ATP-binding subunit ClpX"/>
    <property type="match status" value="1"/>
</dbReference>
<dbReference type="FunFam" id="3.40.50.300:FF:000005">
    <property type="entry name" value="ATP-dependent Clp protease ATP-binding subunit ClpX"/>
    <property type="match status" value="1"/>
</dbReference>
<dbReference type="Gene3D" id="1.10.8.60">
    <property type="match status" value="1"/>
</dbReference>
<dbReference type="Gene3D" id="6.20.220.10">
    <property type="entry name" value="ClpX chaperone, C4-type zinc finger domain"/>
    <property type="match status" value="1"/>
</dbReference>
<dbReference type="Gene3D" id="3.40.50.300">
    <property type="entry name" value="P-loop containing nucleotide triphosphate hydrolases"/>
    <property type="match status" value="1"/>
</dbReference>
<dbReference type="HAMAP" id="MF_00175">
    <property type="entry name" value="ClpX"/>
    <property type="match status" value="1"/>
</dbReference>
<dbReference type="InterPro" id="IPR003593">
    <property type="entry name" value="AAA+_ATPase"/>
</dbReference>
<dbReference type="InterPro" id="IPR050052">
    <property type="entry name" value="ATP-dep_Clp_protease_ClpX"/>
</dbReference>
<dbReference type="InterPro" id="IPR003959">
    <property type="entry name" value="ATPase_AAA_core"/>
</dbReference>
<dbReference type="InterPro" id="IPR019489">
    <property type="entry name" value="Clp_ATPase_C"/>
</dbReference>
<dbReference type="InterPro" id="IPR004487">
    <property type="entry name" value="Clp_protease_ATP-bd_su_ClpX"/>
</dbReference>
<dbReference type="InterPro" id="IPR046425">
    <property type="entry name" value="ClpX_bact"/>
</dbReference>
<dbReference type="InterPro" id="IPR027417">
    <property type="entry name" value="P-loop_NTPase"/>
</dbReference>
<dbReference type="InterPro" id="IPR010603">
    <property type="entry name" value="Znf_CppX_C4"/>
</dbReference>
<dbReference type="InterPro" id="IPR038366">
    <property type="entry name" value="Znf_CppX_C4_sf"/>
</dbReference>
<dbReference type="NCBIfam" id="TIGR00382">
    <property type="entry name" value="clpX"/>
    <property type="match status" value="1"/>
</dbReference>
<dbReference type="NCBIfam" id="NF003745">
    <property type="entry name" value="PRK05342.1"/>
    <property type="match status" value="1"/>
</dbReference>
<dbReference type="PANTHER" id="PTHR48102:SF7">
    <property type="entry name" value="ATP-DEPENDENT CLP PROTEASE ATP-BINDING SUBUNIT CLPX-LIKE, MITOCHONDRIAL"/>
    <property type="match status" value="1"/>
</dbReference>
<dbReference type="PANTHER" id="PTHR48102">
    <property type="entry name" value="ATP-DEPENDENT CLP PROTEASE ATP-BINDING SUBUNIT CLPX-LIKE, MITOCHONDRIAL-RELATED"/>
    <property type="match status" value="1"/>
</dbReference>
<dbReference type="Pfam" id="PF07724">
    <property type="entry name" value="AAA_2"/>
    <property type="match status" value="1"/>
</dbReference>
<dbReference type="Pfam" id="PF10431">
    <property type="entry name" value="ClpB_D2-small"/>
    <property type="match status" value="1"/>
</dbReference>
<dbReference type="Pfam" id="PF06689">
    <property type="entry name" value="zf-C4_ClpX"/>
    <property type="match status" value="1"/>
</dbReference>
<dbReference type="SMART" id="SM00382">
    <property type="entry name" value="AAA"/>
    <property type="match status" value="1"/>
</dbReference>
<dbReference type="SMART" id="SM01086">
    <property type="entry name" value="ClpB_D2-small"/>
    <property type="match status" value="1"/>
</dbReference>
<dbReference type="SMART" id="SM00994">
    <property type="entry name" value="zf-C4_ClpX"/>
    <property type="match status" value="1"/>
</dbReference>
<dbReference type="SUPFAM" id="SSF57716">
    <property type="entry name" value="Glucocorticoid receptor-like (DNA-binding domain)"/>
    <property type="match status" value="1"/>
</dbReference>
<dbReference type="SUPFAM" id="SSF52540">
    <property type="entry name" value="P-loop containing nucleoside triphosphate hydrolases"/>
    <property type="match status" value="1"/>
</dbReference>
<dbReference type="PROSITE" id="PS51902">
    <property type="entry name" value="CLPX_ZB"/>
    <property type="match status" value="1"/>
</dbReference>
<sequence length="423" mass="46226">MTDKRKDGSGKLLYCSFCGKSQHEVRKLIAGPSVYICDECVDLCNDIIREEIKELVPHRERNALPTPHEIRQHLDDYVIGQETAKKVLAVAVYNHYKRLRNGDTSNGVELGKSNILLIGPTGSGKTLLAETLARYLDVPFTMADATTLTEAGYVGEDVENIIQKLLQKCDYDVQKAQRGIVYIDEIDKISRKSDNPSITRDVSGEGVQQALLKLIEGTIAAVPPQGGRKHPQQEFLQVDTSKILFICGGAFAGLDKVIGQRLNTSTGIGFSAKVKGESEKATEGELLAQAEPEDLIKFGLIPEFIGRLPVVATLSELSEEALIQILKEPKNALTKQYQALFNLEGVDLEFRSEALTAIAKKAMVRKTGARGLRSIVEGALLDTMYDLPSMENVGKVVVDESVVNGQSAPLLIYSKPDAQVSGE</sequence>
<protein>
    <recommendedName>
        <fullName evidence="1">ATP-dependent Clp protease ATP-binding subunit ClpX</fullName>
    </recommendedName>
</protein>
<accession>Q7N0L4</accession>
<feature type="chain" id="PRO_0000160397" description="ATP-dependent Clp protease ATP-binding subunit ClpX">
    <location>
        <begin position="1"/>
        <end position="423"/>
    </location>
</feature>
<feature type="domain" description="ClpX-type ZB" evidence="2">
    <location>
        <begin position="2"/>
        <end position="56"/>
    </location>
</feature>
<feature type="binding site" evidence="2">
    <location>
        <position position="15"/>
    </location>
    <ligand>
        <name>Zn(2+)</name>
        <dbReference type="ChEBI" id="CHEBI:29105"/>
    </ligand>
</feature>
<feature type="binding site" evidence="2">
    <location>
        <position position="18"/>
    </location>
    <ligand>
        <name>Zn(2+)</name>
        <dbReference type="ChEBI" id="CHEBI:29105"/>
    </ligand>
</feature>
<feature type="binding site" evidence="2">
    <location>
        <position position="37"/>
    </location>
    <ligand>
        <name>Zn(2+)</name>
        <dbReference type="ChEBI" id="CHEBI:29105"/>
    </ligand>
</feature>
<feature type="binding site" evidence="2">
    <location>
        <position position="40"/>
    </location>
    <ligand>
        <name>Zn(2+)</name>
        <dbReference type="ChEBI" id="CHEBI:29105"/>
    </ligand>
</feature>
<feature type="binding site" evidence="1">
    <location>
        <begin position="120"/>
        <end position="127"/>
    </location>
    <ligand>
        <name>ATP</name>
        <dbReference type="ChEBI" id="CHEBI:30616"/>
    </ligand>
</feature>
<keyword id="KW-0067">ATP-binding</keyword>
<keyword id="KW-0143">Chaperone</keyword>
<keyword id="KW-0479">Metal-binding</keyword>
<keyword id="KW-0547">Nucleotide-binding</keyword>
<keyword id="KW-1185">Reference proteome</keyword>
<keyword id="KW-0862">Zinc</keyword>
<comment type="function">
    <text evidence="1">ATP-dependent specificity component of the Clp protease. It directs the protease to specific substrates. Can perform chaperone functions in the absence of ClpP.</text>
</comment>
<comment type="subunit">
    <text evidence="1">Component of the ClpX-ClpP complex. Forms a hexameric ring that, in the presence of ATP, binds to fourteen ClpP subunits assembled into a disk-like structure with a central cavity, resembling the structure of eukaryotic proteasomes.</text>
</comment>
<comment type="similarity">
    <text evidence="1">Belongs to the ClpX chaperone family.</text>
</comment>
<organism>
    <name type="scientific">Photorhabdus laumondii subsp. laumondii (strain DSM 15139 / CIP 105565 / TT01)</name>
    <name type="common">Photorhabdus luminescens subsp. laumondii</name>
    <dbReference type="NCBI Taxonomy" id="243265"/>
    <lineage>
        <taxon>Bacteria</taxon>
        <taxon>Pseudomonadati</taxon>
        <taxon>Pseudomonadota</taxon>
        <taxon>Gammaproteobacteria</taxon>
        <taxon>Enterobacterales</taxon>
        <taxon>Morganellaceae</taxon>
        <taxon>Photorhabdus</taxon>
    </lineage>
</organism>
<gene>
    <name evidence="1" type="primary">clpX</name>
    <name type="ordered locus">plu3868</name>
</gene>
<name>CLPX_PHOLL</name>